<proteinExistence type="inferred from homology"/>
<accession>P0DB99</accession>
<accession>P65244</accession>
<accession>Q9A1Z7</accession>
<reference key="1">
    <citation type="journal article" date="2003" name="Genome Res.">
        <title>Genome sequence of an M3 strain of Streptococcus pyogenes reveals a large-scale genomic rearrangement in invasive strains and new insights into phage evolution.</title>
        <authorList>
            <person name="Nakagawa I."/>
            <person name="Kurokawa K."/>
            <person name="Yamashita A."/>
            <person name="Nakata M."/>
            <person name="Tomiyasu Y."/>
            <person name="Okahashi N."/>
            <person name="Kawabata S."/>
            <person name="Yamazaki K."/>
            <person name="Shiba T."/>
            <person name="Yasunaga T."/>
            <person name="Hayashi H."/>
            <person name="Hattori M."/>
            <person name="Hamada S."/>
        </authorList>
    </citation>
    <scope>NUCLEOTIDE SEQUENCE [LARGE SCALE GENOMIC DNA]</scope>
    <source>
        <strain>SSI-1</strain>
    </source>
</reference>
<protein>
    <recommendedName>
        <fullName evidence="1">Ribose-phosphate pyrophosphokinase 1</fullName>
        <shortName evidence="1">RPPK 1</shortName>
        <ecNumber evidence="1">2.7.6.1</ecNumber>
    </recommendedName>
    <alternativeName>
        <fullName evidence="1">5-phospho-D-ribosyl alpha-1-diphosphate synthase 1</fullName>
    </alternativeName>
    <alternativeName>
        <fullName evidence="1">Phosphoribosyl diphosphate synthase 1</fullName>
    </alternativeName>
    <alternativeName>
        <fullName evidence="1">Phosphoribosyl pyrophosphate synthase 1</fullName>
        <shortName evidence="1">P-Rib-PP synthase 1</shortName>
        <shortName evidence="1">PRPP synthase 1</shortName>
        <shortName evidence="1">PRPPase 1</shortName>
    </alternativeName>
</protein>
<keyword id="KW-0067">ATP-binding</keyword>
<keyword id="KW-0963">Cytoplasm</keyword>
<keyword id="KW-0418">Kinase</keyword>
<keyword id="KW-0460">Magnesium</keyword>
<keyword id="KW-0479">Metal-binding</keyword>
<keyword id="KW-0545">Nucleotide biosynthesis</keyword>
<keyword id="KW-0547">Nucleotide-binding</keyword>
<keyword id="KW-0808">Transferase</keyword>
<organism>
    <name type="scientific">Streptococcus pyogenes serotype M3 (strain SSI-1)</name>
    <dbReference type="NCBI Taxonomy" id="193567"/>
    <lineage>
        <taxon>Bacteria</taxon>
        <taxon>Bacillati</taxon>
        <taxon>Bacillota</taxon>
        <taxon>Bacilli</taxon>
        <taxon>Lactobacillales</taxon>
        <taxon>Streptococcaceae</taxon>
        <taxon>Streptococcus</taxon>
    </lineage>
</organism>
<feature type="chain" id="PRO_0000411387" description="Ribose-phosphate pyrophosphokinase 1">
    <location>
        <begin position="1"/>
        <end position="320"/>
    </location>
</feature>
<feature type="active site" evidence="1">
    <location>
        <position position="196"/>
    </location>
</feature>
<feature type="binding site" evidence="1">
    <location>
        <begin position="39"/>
        <end position="41"/>
    </location>
    <ligand>
        <name>ATP</name>
        <dbReference type="ChEBI" id="CHEBI:30616"/>
    </ligand>
</feature>
<feature type="binding site" evidence="1">
    <location>
        <begin position="98"/>
        <end position="99"/>
    </location>
    <ligand>
        <name>ATP</name>
        <dbReference type="ChEBI" id="CHEBI:30616"/>
    </ligand>
</feature>
<feature type="binding site" evidence="1">
    <location>
        <position position="132"/>
    </location>
    <ligand>
        <name>Mg(2+)</name>
        <dbReference type="ChEBI" id="CHEBI:18420"/>
        <label>1</label>
    </ligand>
</feature>
<feature type="binding site" evidence="1">
    <location>
        <position position="173"/>
    </location>
    <ligand>
        <name>Mg(2+)</name>
        <dbReference type="ChEBI" id="CHEBI:18420"/>
        <label>2</label>
    </ligand>
</feature>
<feature type="binding site" evidence="1">
    <location>
        <position position="198"/>
    </location>
    <ligand>
        <name>D-ribose 5-phosphate</name>
        <dbReference type="ChEBI" id="CHEBI:78346"/>
    </ligand>
</feature>
<feature type="binding site" evidence="1">
    <location>
        <position position="224"/>
    </location>
    <ligand>
        <name>D-ribose 5-phosphate</name>
        <dbReference type="ChEBI" id="CHEBI:78346"/>
    </ligand>
</feature>
<feature type="binding site" evidence="1">
    <location>
        <begin position="228"/>
        <end position="232"/>
    </location>
    <ligand>
        <name>D-ribose 5-phosphate</name>
        <dbReference type="ChEBI" id="CHEBI:78346"/>
    </ligand>
</feature>
<gene>
    <name evidence="1" type="primary">prs1</name>
    <name type="synonym">prsA</name>
    <name type="synonym">prsA.1</name>
    <name type="ordered locus">SPs0016</name>
</gene>
<dbReference type="EC" id="2.7.6.1" evidence="1"/>
<dbReference type="EMBL" id="BA000034">
    <property type="protein sequence ID" value="BAC63111.1"/>
    <property type="molecule type" value="Genomic_DNA"/>
</dbReference>
<dbReference type="RefSeq" id="WP_002986722.1">
    <property type="nucleotide sequence ID" value="NC_004606.1"/>
</dbReference>
<dbReference type="SMR" id="P0DB99"/>
<dbReference type="KEGG" id="sps:SPs0016"/>
<dbReference type="HOGENOM" id="CLU_033546_4_0_9"/>
<dbReference type="UniPathway" id="UPA00087">
    <property type="reaction ID" value="UER00172"/>
</dbReference>
<dbReference type="GO" id="GO:0005737">
    <property type="term" value="C:cytoplasm"/>
    <property type="evidence" value="ECO:0007669"/>
    <property type="project" value="UniProtKB-SubCell"/>
</dbReference>
<dbReference type="GO" id="GO:0002189">
    <property type="term" value="C:ribose phosphate diphosphokinase complex"/>
    <property type="evidence" value="ECO:0007669"/>
    <property type="project" value="TreeGrafter"/>
</dbReference>
<dbReference type="GO" id="GO:0005524">
    <property type="term" value="F:ATP binding"/>
    <property type="evidence" value="ECO:0007669"/>
    <property type="project" value="UniProtKB-KW"/>
</dbReference>
<dbReference type="GO" id="GO:0016301">
    <property type="term" value="F:kinase activity"/>
    <property type="evidence" value="ECO:0007669"/>
    <property type="project" value="UniProtKB-KW"/>
</dbReference>
<dbReference type="GO" id="GO:0000287">
    <property type="term" value="F:magnesium ion binding"/>
    <property type="evidence" value="ECO:0007669"/>
    <property type="project" value="UniProtKB-UniRule"/>
</dbReference>
<dbReference type="GO" id="GO:0004749">
    <property type="term" value="F:ribose phosphate diphosphokinase activity"/>
    <property type="evidence" value="ECO:0007669"/>
    <property type="project" value="UniProtKB-UniRule"/>
</dbReference>
<dbReference type="GO" id="GO:0006015">
    <property type="term" value="P:5-phosphoribose 1-diphosphate biosynthetic process"/>
    <property type="evidence" value="ECO:0007669"/>
    <property type="project" value="UniProtKB-UniRule"/>
</dbReference>
<dbReference type="GO" id="GO:0006164">
    <property type="term" value="P:purine nucleotide biosynthetic process"/>
    <property type="evidence" value="ECO:0007669"/>
    <property type="project" value="TreeGrafter"/>
</dbReference>
<dbReference type="GO" id="GO:0009156">
    <property type="term" value="P:ribonucleoside monophosphate biosynthetic process"/>
    <property type="evidence" value="ECO:0007669"/>
    <property type="project" value="InterPro"/>
</dbReference>
<dbReference type="CDD" id="cd06223">
    <property type="entry name" value="PRTases_typeI"/>
    <property type="match status" value="1"/>
</dbReference>
<dbReference type="FunFam" id="3.40.50.2020:FF:000001">
    <property type="entry name" value="Ribose-phosphate pyrophosphokinase"/>
    <property type="match status" value="1"/>
</dbReference>
<dbReference type="Gene3D" id="3.40.50.2020">
    <property type="match status" value="2"/>
</dbReference>
<dbReference type="HAMAP" id="MF_00583_B">
    <property type="entry name" value="RibP_PPkinase_B"/>
    <property type="match status" value="1"/>
</dbReference>
<dbReference type="InterPro" id="IPR000842">
    <property type="entry name" value="PRib_PP_synth_CS"/>
</dbReference>
<dbReference type="InterPro" id="IPR029099">
    <property type="entry name" value="Pribosyltran_N"/>
</dbReference>
<dbReference type="InterPro" id="IPR000836">
    <property type="entry name" value="PRibTrfase_dom"/>
</dbReference>
<dbReference type="InterPro" id="IPR029057">
    <property type="entry name" value="PRTase-like"/>
</dbReference>
<dbReference type="InterPro" id="IPR005946">
    <property type="entry name" value="Rib-P_diPkinase"/>
</dbReference>
<dbReference type="InterPro" id="IPR037515">
    <property type="entry name" value="Rib-P_diPkinase_bac"/>
</dbReference>
<dbReference type="NCBIfam" id="NF002320">
    <property type="entry name" value="PRK01259.1"/>
    <property type="match status" value="1"/>
</dbReference>
<dbReference type="NCBIfam" id="NF002618">
    <property type="entry name" value="PRK02269.1"/>
    <property type="match status" value="1"/>
</dbReference>
<dbReference type="NCBIfam" id="TIGR01251">
    <property type="entry name" value="ribP_PPkin"/>
    <property type="match status" value="1"/>
</dbReference>
<dbReference type="PANTHER" id="PTHR10210">
    <property type="entry name" value="RIBOSE-PHOSPHATE DIPHOSPHOKINASE FAMILY MEMBER"/>
    <property type="match status" value="1"/>
</dbReference>
<dbReference type="PANTHER" id="PTHR10210:SF41">
    <property type="entry name" value="RIBOSE-PHOSPHATE PYROPHOSPHOKINASE 1, CHLOROPLASTIC"/>
    <property type="match status" value="1"/>
</dbReference>
<dbReference type="Pfam" id="PF14572">
    <property type="entry name" value="Pribosyl_synth"/>
    <property type="match status" value="1"/>
</dbReference>
<dbReference type="Pfam" id="PF13793">
    <property type="entry name" value="Pribosyltran_N"/>
    <property type="match status" value="1"/>
</dbReference>
<dbReference type="SMART" id="SM01400">
    <property type="entry name" value="Pribosyltran_N"/>
    <property type="match status" value="1"/>
</dbReference>
<dbReference type="SUPFAM" id="SSF53271">
    <property type="entry name" value="PRTase-like"/>
    <property type="match status" value="1"/>
</dbReference>
<dbReference type="PROSITE" id="PS00114">
    <property type="entry name" value="PRPP_SYNTHASE"/>
    <property type="match status" value="1"/>
</dbReference>
<name>KPRS1_STRPQ</name>
<evidence type="ECO:0000255" key="1">
    <source>
        <dbReference type="HAMAP-Rule" id="MF_00583"/>
    </source>
</evidence>
<sequence>MSYSDLKLFALSSNKELAEKVASAMGIQLGKSTVRQFSDGEIQVNIEESIRGHHVFILQSTSSPVNDNLMEILIMVDALKRASAEKISVVMPYYGYARQDRKARSREPITSKLVANMLEVAGVDRLLTVDLHAAQIQGFFDIPVDHLMGAPLIADYFDRHGLVGEDVVVVSPDHGGVTRARKLAQFLQTPIAIIDKRRSVDKMNTSEVMNIIGNVSGKKCILIDDMIDTAGTICHAADALAEAGATAVYASCTHPVLSGPALDNIQRSAIEKLIVLDTIYLPKERLIDKIEQISIADLVAEAIIRIHEKRPLSPLFEMGN</sequence>
<comment type="function">
    <text evidence="1">Involved in the biosynthesis of the central metabolite phospho-alpha-D-ribosyl-1-pyrophosphate (PRPP) via the transfer of pyrophosphoryl group from ATP to 1-hydroxyl of ribose-5-phosphate (Rib-5-P).</text>
</comment>
<comment type="catalytic activity">
    <reaction evidence="1">
        <text>D-ribose 5-phosphate + ATP = 5-phospho-alpha-D-ribose 1-diphosphate + AMP + H(+)</text>
        <dbReference type="Rhea" id="RHEA:15609"/>
        <dbReference type="ChEBI" id="CHEBI:15378"/>
        <dbReference type="ChEBI" id="CHEBI:30616"/>
        <dbReference type="ChEBI" id="CHEBI:58017"/>
        <dbReference type="ChEBI" id="CHEBI:78346"/>
        <dbReference type="ChEBI" id="CHEBI:456215"/>
        <dbReference type="EC" id="2.7.6.1"/>
    </reaction>
</comment>
<comment type="cofactor">
    <cofactor evidence="1">
        <name>Mg(2+)</name>
        <dbReference type="ChEBI" id="CHEBI:18420"/>
    </cofactor>
    <text evidence="1">Binds 2 Mg(2+) ions per subunit.</text>
</comment>
<comment type="pathway">
    <text evidence="1">Metabolic intermediate biosynthesis; 5-phospho-alpha-D-ribose 1-diphosphate biosynthesis; 5-phospho-alpha-D-ribose 1-diphosphate from D-ribose 5-phosphate (route I): step 1/1.</text>
</comment>
<comment type="subunit">
    <text evidence="1">Homohexamer.</text>
</comment>
<comment type="subcellular location">
    <subcellularLocation>
        <location evidence="1">Cytoplasm</location>
    </subcellularLocation>
</comment>
<comment type="similarity">
    <text evidence="1">Belongs to the ribose-phosphate pyrophosphokinase family. Class I subfamily.</text>
</comment>